<comment type="function">
    <text evidence="1">Xylan 1,4-beta-xylosidase involved in the hydrolysis of xylan, a major structural heterogeneous polysaccharide found in plant biomass representing the second most abundant polysaccharide in the biosphere, after cellulose.</text>
</comment>
<comment type="catalytic activity">
    <reaction>
        <text>Hydrolysis of (1-&gt;4)-beta-D-xylans, to remove successive D-xylose residues from the non-reducing termini.</text>
        <dbReference type="EC" id="3.2.1.37"/>
    </reaction>
</comment>
<comment type="pathway">
    <text>Glycan degradation; xylan degradation.</text>
</comment>
<comment type="subcellular location">
    <subcellularLocation>
        <location evidence="1">Secreted</location>
    </subcellularLocation>
</comment>
<comment type="similarity">
    <text evidence="3">Belongs to the glycosyl hydrolase 3 family.</text>
</comment>
<gene>
    <name type="primary">bxlB</name>
    <name type="ORF">ATEG_09052</name>
</gene>
<protein>
    <recommendedName>
        <fullName>Probable exo-1,4-beta-xylosidase bxlB</fullName>
        <ecNumber>3.2.1.37</ecNumber>
    </recommendedName>
    <alternativeName>
        <fullName>1,4-beta-D-xylan xylohydrolase bxlB</fullName>
    </alternativeName>
    <alternativeName>
        <fullName>Beta-xylosidase bxlB</fullName>
    </alternativeName>
    <alternativeName>
        <fullName>Xylobiase bxlB</fullName>
    </alternativeName>
</protein>
<proteinExistence type="inferred from homology"/>
<organism>
    <name type="scientific">Aspergillus terreus (strain NIH 2624 / FGSC A1156)</name>
    <dbReference type="NCBI Taxonomy" id="341663"/>
    <lineage>
        <taxon>Eukaryota</taxon>
        <taxon>Fungi</taxon>
        <taxon>Dikarya</taxon>
        <taxon>Ascomycota</taxon>
        <taxon>Pezizomycotina</taxon>
        <taxon>Eurotiomycetes</taxon>
        <taxon>Eurotiomycetidae</taxon>
        <taxon>Eurotiales</taxon>
        <taxon>Aspergillaceae</taxon>
        <taxon>Aspergillus</taxon>
        <taxon>Aspergillus subgen. Circumdati</taxon>
    </lineage>
</organism>
<feature type="signal peptide" evidence="2">
    <location>
        <begin position="1"/>
        <end position="25"/>
    </location>
</feature>
<feature type="chain" id="PRO_0000394090" description="Probable exo-1,4-beta-xylosidase bxlB">
    <location>
        <begin position="26"/>
        <end position="765"/>
    </location>
</feature>
<feature type="active site" evidence="1">
    <location>
        <position position="293"/>
    </location>
</feature>
<feature type="glycosylation site" description="N-linked (GlcNAc...) asparagine" evidence="2">
    <location>
        <position position="67"/>
    </location>
</feature>
<feature type="glycosylation site" description="N-linked (GlcNAc...) asparagine" evidence="2">
    <location>
        <position position="107"/>
    </location>
</feature>
<feature type="glycosylation site" description="N-linked (GlcNAc...) asparagine" evidence="2">
    <location>
        <position position="345"/>
    </location>
</feature>
<feature type="glycosylation site" description="N-linked (GlcNAc...) asparagine" evidence="2">
    <location>
        <position position="412"/>
    </location>
</feature>
<feature type="glycosylation site" description="N-linked (GlcNAc...) asparagine" evidence="2">
    <location>
        <position position="423"/>
    </location>
</feature>
<feature type="glycosylation site" description="N-linked (GlcNAc...) asparagine" evidence="2">
    <location>
        <position position="464"/>
    </location>
</feature>
<feature type="glycosylation site" description="N-linked (GlcNAc...) asparagine" evidence="2">
    <location>
        <position position="761"/>
    </location>
</feature>
<name>BXLB_ASPTN</name>
<reference key="1">
    <citation type="submission" date="2005-09" db="EMBL/GenBank/DDBJ databases">
        <title>Annotation of the Aspergillus terreus NIH2624 genome.</title>
        <authorList>
            <person name="Birren B.W."/>
            <person name="Lander E.S."/>
            <person name="Galagan J.E."/>
            <person name="Nusbaum C."/>
            <person name="Devon K."/>
            <person name="Henn M."/>
            <person name="Ma L.-J."/>
            <person name="Jaffe D.B."/>
            <person name="Butler J."/>
            <person name="Alvarez P."/>
            <person name="Gnerre S."/>
            <person name="Grabherr M."/>
            <person name="Kleber M."/>
            <person name="Mauceli E.W."/>
            <person name="Brockman W."/>
            <person name="Rounsley S."/>
            <person name="Young S.K."/>
            <person name="LaButti K."/>
            <person name="Pushparaj V."/>
            <person name="DeCaprio D."/>
            <person name="Crawford M."/>
            <person name="Koehrsen M."/>
            <person name="Engels R."/>
            <person name="Montgomery P."/>
            <person name="Pearson M."/>
            <person name="Howarth C."/>
            <person name="Larson L."/>
            <person name="Luoma S."/>
            <person name="White J."/>
            <person name="Alvarado L."/>
            <person name="Kodira C.D."/>
            <person name="Zeng Q."/>
            <person name="Oleary S."/>
            <person name="Yandava C."/>
            <person name="Denning D.W."/>
            <person name="Nierman W.C."/>
            <person name="Milne T."/>
            <person name="Madden K."/>
        </authorList>
    </citation>
    <scope>NUCLEOTIDE SEQUENCE [LARGE SCALE GENOMIC DNA]</scope>
    <source>
        <strain>NIH 2624 / FGSC A1156</strain>
    </source>
</reference>
<keyword id="KW-0119">Carbohydrate metabolism</keyword>
<keyword id="KW-0325">Glycoprotein</keyword>
<keyword id="KW-0326">Glycosidase</keyword>
<keyword id="KW-0378">Hydrolase</keyword>
<keyword id="KW-0624">Polysaccharide degradation</keyword>
<keyword id="KW-1185">Reference proteome</keyword>
<keyword id="KW-0964">Secreted</keyword>
<keyword id="KW-0732">Signal</keyword>
<keyword id="KW-0858">Xylan degradation</keyword>
<evidence type="ECO:0000250" key="1"/>
<evidence type="ECO:0000255" key="2"/>
<evidence type="ECO:0000305" key="3"/>
<accession>Q0CB82</accession>
<dbReference type="EC" id="3.2.1.37"/>
<dbReference type="EMBL" id="CH476607">
    <property type="protein sequence ID" value="EAU30189.1"/>
    <property type="molecule type" value="Genomic_DNA"/>
</dbReference>
<dbReference type="RefSeq" id="XP_001217674.1">
    <property type="nucleotide sequence ID" value="XM_001217673.1"/>
</dbReference>
<dbReference type="SMR" id="Q0CB82"/>
<dbReference type="STRING" id="341663.Q0CB82"/>
<dbReference type="GlyCosmos" id="Q0CB82">
    <property type="glycosylation" value="7 sites, No reported glycans"/>
</dbReference>
<dbReference type="EnsemblFungi" id="EAU30189">
    <property type="protein sequence ID" value="EAU30189"/>
    <property type="gene ID" value="ATEG_09052"/>
</dbReference>
<dbReference type="GeneID" id="4354040"/>
<dbReference type="VEuPathDB" id="FungiDB:ATEG_09052"/>
<dbReference type="eggNOG" id="ENOG502QQ55">
    <property type="taxonomic scope" value="Eukaryota"/>
</dbReference>
<dbReference type="HOGENOM" id="CLU_004542_5_3_1"/>
<dbReference type="OMA" id="WGFKGHV"/>
<dbReference type="OrthoDB" id="47059at2759"/>
<dbReference type="UniPathway" id="UPA00114"/>
<dbReference type="Proteomes" id="UP000007963">
    <property type="component" value="Unassembled WGS sequence"/>
</dbReference>
<dbReference type="GO" id="GO:0005576">
    <property type="term" value="C:extracellular region"/>
    <property type="evidence" value="ECO:0007669"/>
    <property type="project" value="UniProtKB-SubCell"/>
</dbReference>
<dbReference type="GO" id="GO:0046556">
    <property type="term" value="F:alpha-L-arabinofuranosidase activity"/>
    <property type="evidence" value="ECO:0007669"/>
    <property type="project" value="TreeGrafter"/>
</dbReference>
<dbReference type="GO" id="GO:0009044">
    <property type="term" value="F:xylan 1,4-beta-xylosidase activity"/>
    <property type="evidence" value="ECO:0007669"/>
    <property type="project" value="UniProtKB-EC"/>
</dbReference>
<dbReference type="GO" id="GO:0031222">
    <property type="term" value="P:arabinan catabolic process"/>
    <property type="evidence" value="ECO:0007669"/>
    <property type="project" value="TreeGrafter"/>
</dbReference>
<dbReference type="GO" id="GO:0045493">
    <property type="term" value="P:xylan catabolic process"/>
    <property type="evidence" value="ECO:0007669"/>
    <property type="project" value="UniProtKB-UniPathway"/>
</dbReference>
<dbReference type="FunFam" id="3.40.50.1700:FF:000007">
    <property type="entry name" value="Exo-1,4-beta-xylosidase xlnD"/>
    <property type="match status" value="1"/>
</dbReference>
<dbReference type="FunFam" id="3.20.20.300:FF:000013">
    <property type="entry name" value="Probable exo-1,4-beta-xylosidase xlnD"/>
    <property type="match status" value="1"/>
</dbReference>
<dbReference type="Gene3D" id="3.40.50.1700">
    <property type="entry name" value="Glycoside hydrolase family 3 C-terminal domain"/>
    <property type="match status" value="1"/>
</dbReference>
<dbReference type="Gene3D" id="3.20.20.300">
    <property type="entry name" value="Glycoside hydrolase, family 3, N-terminal domain"/>
    <property type="match status" value="1"/>
</dbReference>
<dbReference type="Gene3D" id="2.60.40.10">
    <property type="entry name" value="Immunoglobulins"/>
    <property type="match status" value="1"/>
</dbReference>
<dbReference type="InterPro" id="IPR044993">
    <property type="entry name" value="BXL"/>
</dbReference>
<dbReference type="InterPro" id="IPR026891">
    <property type="entry name" value="Fn3-like"/>
</dbReference>
<dbReference type="InterPro" id="IPR002772">
    <property type="entry name" value="Glyco_hydro_3_C"/>
</dbReference>
<dbReference type="InterPro" id="IPR036881">
    <property type="entry name" value="Glyco_hydro_3_C_sf"/>
</dbReference>
<dbReference type="InterPro" id="IPR001764">
    <property type="entry name" value="Glyco_hydro_3_N"/>
</dbReference>
<dbReference type="InterPro" id="IPR036962">
    <property type="entry name" value="Glyco_hydro_3_N_sf"/>
</dbReference>
<dbReference type="InterPro" id="IPR017853">
    <property type="entry name" value="Glycoside_hydrolase_SF"/>
</dbReference>
<dbReference type="InterPro" id="IPR013783">
    <property type="entry name" value="Ig-like_fold"/>
</dbReference>
<dbReference type="PANTHER" id="PTHR42721:SF3">
    <property type="entry name" value="BETA-D-XYLOSIDASE 5-RELATED"/>
    <property type="match status" value="1"/>
</dbReference>
<dbReference type="PANTHER" id="PTHR42721">
    <property type="entry name" value="SUGAR HYDROLASE-RELATED"/>
    <property type="match status" value="1"/>
</dbReference>
<dbReference type="Pfam" id="PF14310">
    <property type="entry name" value="Fn3-like"/>
    <property type="match status" value="1"/>
</dbReference>
<dbReference type="Pfam" id="PF00933">
    <property type="entry name" value="Glyco_hydro_3"/>
    <property type="match status" value="1"/>
</dbReference>
<dbReference type="Pfam" id="PF01915">
    <property type="entry name" value="Glyco_hydro_3_C"/>
    <property type="match status" value="1"/>
</dbReference>
<dbReference type="PRINTS" id="PR00133">
    <property type="entry name" value="GLHYDRLASE3"/>
</dbReference>
<dbReference type="SMART" id="SM01217">
    <property type="entry name" value="Fn3_like"/>
    <property type="match status" value="1"/>
</dbReference>
<dbReference type="SUPFAM" id="SSF51445">
    <property type="entry name" value="(Trans)glycosidases"/>
    <property type="match status" value="1"/>
</dbReference>
<dbReference type="SUPFAM" id="SSF52279">
    <property type="entry name" value="Beta-D-glucan exohydrolase, C-terminal domain"/>
    <property type="match status" value="1"/>
</dbReference>
<sequence>MYSSNSRRAASILACIVSLTQLGFAQSPFPDCENGPLSKNAVCDTTLDPVTRAQALLAAMTLEEKINNTQYNSPGVPRLGLPAYNWWSEALHGVAGSPGVHFADSGNFSYATSFPSPITLGAAFDDDLVKQIATVIGTEGRAFGNAGHAGLDYWTPNINPYRDPRWGRGQETPGEDPFHTSRYVYHLIDGLQDGIGPEKPKIVATCKHFAGYDIEDWEGNERYAFDAVISDQDMAEYYFPPFKTCTRDAKVDAVMCSYNSVNGIPTCADPWLLQTVLREHWEWEGVGHWVTSDCGAIDNIYKDHKYVADGAHAAAVAVNAGTDLDCGSVYPQFLGSAISQGLLGNRTLDRALTRLYSSLVKLGYFDPAADQPYRSIGWSDVATPDAEQLAHTAAVEGTVLLKNDGTLPLKKNGTVAIVGPYANATTQLQGNYEGTAKYIHTMLSAAAQQGYKVKYAPGTGINSNSTSGFEQALNAAKGSDLVIYFGGIDHEVEAEALDRTSIAWPGNQLDLIQQLSDLKKPLVVVQFGGGQVDDSSLLSNAGVNGLLWAGYPSQAGGAAVFDILTGKTAPAGRLPVTQYPEEYVDQVPMTDMNLRPGPSNPGRTYRWYDKAVIPFGYGMHYTTFDVSWKRKNYGPYNTAAVKAENAVLETFSLQVKNTGKVTSDYVALVFLTTTDAGPKPYPIKTLVGYQRVKAIRPGERKVVDIDVTVGSVARTAANGDLVLYPGSYKLQVDVEKDYPTAGFKIAGKEVVLDHFPQPPRNATKA</sequence>